<protein>
    <recommendedName>
        <fullName>Altered inheritance of mitochondria protein 3-1</fullName>
    </recommendedName>
</protein>
<reference key="1">
    <citation type="journal article" date="2004" name="Nature">
        <title>Genome evolution in yeasts.</title>
        <authorList>
            <person name="Dujon B."/>
            <person name="Sherman D."/>
            <person name="Fischer G."/>
            <person name="Durrens P."/>
            <person name="Casaregola S."/>
            <person name="Lafontaine I."/>
            <person name="de Montigny J."/>
            <person name="Marck C."/>
            <person name="Neuveglise C."/>
            <person name="Talla E."/>
            <person name="Goffard N."/>
            <person name="Frangeul L."/>
            <person name="Aigle M."/>
            <person name="Anthouard V."/>
            <person name="Babour A."/>
            <person name="Barbe V."/>
            <person name="Barnay S."/>
            <person name="Blanchin S."/>
            <person name="Beckerich J.-M."/>
            <person name="Beyne E."/>
            <person name="Bleykasten C."/>
            <person name="Boisrame A."/>
            <person name="Boyer J."/>
            <person name="Cattolico L."/>
            <person name="Confanioleri F."/>
            <person name="de Daruvar A."/>
            <person name="Despons L."/>
            <person name="Fabre E."/>
            <person name="Fairhead C."/>
            <person name="Ferry-Dumazet H."/>
            <person name="Groppi A."/>
            <person name="Hantraye F."/>
            <person name="Hennequin C."/>
            <person name="Jauniaux N."/>
            <person name="Joyet P."/>
            <person name="Kachouri R."/>
            <person name="Kerrest A."/>
            <person name="Koszul R."/>
            <person name="Lemaire M."/>
            <person name="Lesur I."/>
            <person name="Ma L."/>
            <person name="Muller H."/>
            <person name="Nicaud J.-M."/>
            <person name="Nikolski M."/>
            <person name="Oztas S."/>
            <person name="Ozier-Kalogeropoulos O."/>
            <person name="Pellenz S."/>
            <person name="Potier S."/>
            <person name="Richard G.-F."/>
            <person name="Straub M.-L."/>
            <person name="Suleau A."/>
            <person name="Swennen D."/>
            <person name="Tekaia F."/>
            <person name="Wesolowski-Louvel M."/>
            <person name="Westhof E."/>
            <person name="Wirth B."/>
            <person name="Zeniou-Meyer M."/>
            <person name="Zivanovic Y."/>
            <person name="Bolotin-Fukuhara M."/>
            <person name="Thierry A."/>
            <person name="Bouchier C."/>
            <person name="Caudron B."/>
            <person name="Scarpelli C."/>
            <person name="Gaillardin C."/>
            <person name="Weissenbach J."/>
            <person name="Wincker P."/>
            <person name="Souciet J.-L."/>
        </authorList>
    </citation>
    <scope>NUCLEOTIDE SEQUENCE [LARGE SCALE GENOMIC DNA]</scope>
    <source>
        <strain>ATCC 2001 / BCRC 20586 / JCM 3761 / NBRC 0622 / NRRL Y-65 / CBS 138</strain>
    </source>
</reference>
<dbReference type="EMBL" id="CR380950">
    <property type="protein sequence ID" value="CAG58390.1"/>
    <property type="molecule type" value="Genomic_DNA"/>
</dbReference>
<dbReference type="RefSeq" id="XP_445479.1">
    <property type="nucleotide sequence ID" value="XM_445479.1"/>
</dbReference>
<dbReference type="EnsemblFungi" id="CAGL0D01474g-T">
    <property type="protein sequence ID" value="CAGL0D01474g-T-p1"/>
    <property type="gene ID" value="CAGL0D01474g"/>
</dbReference>
<dbReference type="KEGG" id="cgr:2887115"/>
<dbReference type="CGD" id="CAL0128437">
    <property type="gene designation" value="CAGL0D01474g"/>
</dbReference>
<dbReference type="VEuPathDB" id="FungiDB:CAGL0D01474g"/>
<dbReference type="eggNOG" id="ENOG502S02E">
    <property type="taxonomic scope" value="Eukaryota"/>
</dbReference>
<dbReference type="HOGENOM" id="CLU_415040_0_0_1"/>
<dbReference type="InParanoid" id="Q6FWB5"/>
<dbReference type="OMA" id="IGPKSQH"/>
<dbReference type="Proteomes" id="UP000002428">
    <property type="component" value="Chromosome D"/>
</dbReference>
<dbReference type="GO" id="GO:0030479">
    <property type="term" value="C:actin cortical patch"/>
    <property type="evidence" value="ECO:0007669"/>
    <property type="project" value="InterPro"/>
</dbReference>
<dbReference type="GO" id="GO:0045121">
    <property type="term" value="C:membrane raft"/>
    <property type="evidence" value="ECO:0007669"/>
    <property type="project" value="UniProtKB-SubCell"/>
</dbReference>
<dbReference type="GO" id="GO:0051016">
    <property type="term" value="P:barbed-end actin filament capping"/>
    <property type="evidence" value="ECO:0007669"/>
    <property type="project" value="InterPro"/>
</dbReference>
<dbReference type="InterPro" id="IPR031370">
    <property type="entry name" value="Aim3"/>
</dbReference>
<dbReference type="Pfam" id="PF17096">
    <property type="entry name" value="AIM3"/>
    <property type="match status" value="1"/>
</dbReference>
<proteinExistence type="inferred from homology"/>
<keyword id="KW-0472">Membrane</keyword>
<keyword id="KW-1185">Reference proteome</keyword>
<organism>
    <name type="scientific">Candida glabrata (strain ATCC 2001 / BCRC 20586 / JCM 3761 / NBRC 0622 / NRRL Y-65 / CBS 138)</name>
    <name type="common">Yeast</name>
    <name type="synonym">Nakaseomyces glabratus</name>
    <dbReference type="NCBI Taxonomy" id="284593"/>
    <lineage>
        <taxon>Eukaryota</taxon>
        <taxon>Fungi</taxon>
        <taxon>Dikarya</taxon>
        <taxon>Ascomycota</taxon>
        <taxon>Saccharomycotina</taxon>
        <taxon>Saccharomycetes</taxon>
        <taxon>Saccharomycetales</taxon>
        <taxon>Saccharomycetaceae</taxon>
        <taxon>Nakaseomyces</taxon>
    </lineage>
</organism>
<feature type="chain" id="PRO_0000399598" description="Altered inheritance of mitochondria protein 3-1">
    <location>
        <begin position="1"/>
        <end position="661"/>
    </location>
</feature>
<feature type="region of interest" description="Disordered" evidence="2">
    <location>
        <begin position="19"/>
        <end position="99"/>
    </location>
</feature>
<feature type="region of interest" description="Disordered" evidence="2">
    <location>
        <begin position="116"/>
        <end position="142"/>
    </location>
</feature>
<feature type="region of interest" description="Disordered" evidence="2">
    <location>
        <begin position="154"/>
        <end position="194"/>
    </location>
</feature>
<feature type="region of interest" description="Disordered" evidence="2">
    <location>
        <begin position="263"/>
        <end position="419"/>
    </location>
</feature>
<feature type="region of interest" description="Disordered" evidence="2">
    <location>
        <begin position="431"/>
        <end position="473"/>
    </location>
</feature>
<feature type="region of interest" description="Disordered" evidence="2">
    <location>
        <begin position="487"/>
        <end position="563"/>
    </location>
</feature>
<feature type="region of interest" description="Disordered" evidence="2">
    <location>
        <begin position="615"/>
        <end position="661"/>
    </location>
</feature>
<feature type="compositionally biased region" description="Basic and acidic residues" evidence="2">
    <location>
        <begin position="37"/>
        <end position="58"/>
    </location>
</feature>
<feature type="compositionally biased region" description="Low complexity" evidence="2">
    <location>
        <begin position="120"/>
        <end position="142"/>
    </location>
</feature>
<feature type="compositionally biased region" description="Low complexity" evidence="2">
    <location>
        <begin position="263"/>
        <end position="318"/>
    </location>
</feature>
<feature type="compositionally biased region" description="Polar residues" evidence="2">
    <location>
        <begin position="319"/>
        <end position="328"/>
    </location>
</feature>
<feature type="compositionally biased region" description="Polar residues" evidence="2">
    <location>
        <begin position="356"/>
        <end position="371"/>
    </location>
</feature>
<feature type="compositionally biased region" description="Basic and acidic residues" evidence="2">
    <location>
        <begin position="390"/>
        <end position="399"/>
    </location>
</feature>
<feature type="compositionally biased region" description="Polar residues" evidence="2">
    <location>
        <begin position="406"/>
        <end position="419"/>
    </location>
</feature>
<feature type="compositionally biased region" description="Low complexity" evidence="2">
    <location>
        <begin position="434"/>
        <end position="447"/>
    </location>
</feature>
<feature type="compositionally biased region" description="Polar residues" evidence="2">
    <location>
        <begin position="458"/>
        <end position="473"/>
    </location>
</feature>
<feature type="compositionally biased region" description="Polar residues" evidence="2">
    <location>
        <begin position="512"/>
        <end position="533"/>
    </location>
</feature>
<feature type="compositionally biased region" description="Polar residues" evidence="2">
    <location>
        <begin position="541"/>
        <end position="552"/>
    </location>
</feature>
<name>AIM3A_CANGA</name>
<accession>Q6FWB5</accession>
<comment type="subcellular location">
    <subcellularLocation>
        <location evidence="1">Membrane raft</location>
        <topology evidence="1">Peripheral membrane protein</topology>
    </subcellularLocation>
    <text evidence="1">Localizes within detergent-insoluble glycolipid-enriched membranes.</text>
</comment>
<comment type="similarity">
    <text evidence="3">Belongs to the AIM3 family.</text>
</comment>
<evidence type="ECO:0000250" key="1"/>
<evidence type="ECO:0000256" key="2">
    <source>
        <dbReference type="SAM" id="MobiDB-lite"/>
    </source>
</evidence>
<evidence type="ECO:0000305" key="3"/>
<sequence length="661" mass="72433">MDSLKSGLATAGKFTYKGTKTVAKAGYNTSKKHMHKKDKDTHHTDHHEEDEYSEDYHTPRSVNTLRDPSSFPPPPTRSGQAGHVAGNTAGSIAGNYSGYSQPTAAANNTISYNAQAQNTPYSSPAQQQPVSPQPPVQNSQYNPTQNYAIQQPQQPAGTNANYSYGNQQHPAGQAPIVNSITPNHQYNANNTFQSNLPNQQLNVAAPTQSTNNNFNQMAANNTYTNSAQVAYNSQQQQLQQNSQQNTYSNAPYQVQAQAAYNPLPQQQQQQQQQPEYNTQLQQNQQLHNQQAYGQQQQIYSNNTQPQYVSQTQQTSYTQNAPPQQTRSPEQPVYGQGITPPVQANAYRPMPSIPPDVNQTAITSTNSANEALQNRIPMNNVDLSSLPPPPTHRDRGRASVENETIDENMQTNNSTIDSSSVASADINNNSIRNIPAPAVGPPGAATRAVPPPPPRRTTSQSMSTNSVVETSPGINSIEQINNYYDGTYAGHSANERPPITNTLKRGTPPLPRRSTSTKMNTQPNPQTPISPSRDTNMDLQRRSTVSSIQSSNRPMPDPPIRKDNIQENNIESKQVNQEVNSQMSVSNIGIGDITSELQHIKLKSVGNSYEREIHGEAATEVVHNKPLKKKPPTVPKKKDSLKGKAPPPVPKKKPTLTSFVHS</sequence>
<gene>
    <name type="primary">AIM3-1</name>
    <name type="ordered locus">CAGL0D01474g</name>
</gene>